<gene>
    <name evidence="1" type="primary">rplL</name>
    <name type="ordered locus">Daci_0509</name>
</gene>
<evidence type="ECO:0000255" key="1">
    <source>
        <dbReference type="HAMAP-Rule" id="MF_00368"/>
    </source>
</evidence>
<evidence type="ECO:0000305" key="2"/>
<accession>A9BR97</accession>
<organism>
    <name type="scientific">Delftia acidovorans (strain DSM 14801 / SPH-1)</name>
    <dbReference type="NCBI Taxonomy" id="398578"/>
    <lineage>
        <taxon>Bacteria</taxon>
        <taxon>Pseudomonadati</taxon>
        <taxon>Pseudomonadota</taxon>
        <taxon>Betaproteobacteria</taxon>
        <taxon>Burkholderiales</taxon>
        <taxon>Comamonadaceae</taxon>
        <taxon>Delftia</taxon>
    </lineage>
</organism>
<protein>
    <recommendedName>
        <fullName evidence="1">Large ribosomal subunit protein bL12</fullName>
    </recommendedName>
    <alternativeName>
        <fullName evidence="2">50S ribosomal protein L7/L12</fullName>
    </alternativeName>
</protein>
<comment type="function">
    <text evidence="1">Forms part of the ribosomal stalk which helps the ribosome interact with GTP-bound translation factors. Is thus essential for accurate translation.</text>
</comment>
<comment type="subunit">
    <text evidence="1">Homodimer. Part of the ribosomal stalk of the 50S ribosomal subunit. Forms a multimeric L10(L12)X complex, where L10 forms an elongated spine to which 2 to 4 L12 dimers bind in a sequential fashion. Binds GTP-bound translation factors.</text>
</comment>
<comment type="similarity">
    <text evidence="1">Belongs to the bacterial ribosomal protein bL12 family.</text>
</comment>
<feature type="chain" id="PRO_1000121423" description="Large ribosomal subunit protein bL12">
    <location>
        <begin position="1"/>
        <end position="125"/>
    </location>
</feature>
<proteinExistence type="inferred from homology"/>
<dbReference type="EMBL" id="CP000884">
    <property type="protein sequence ID" value="ABX33155.1"/>
    <property type="molecule type" value="Genomic_DNA"/>
</dbReference>
<dbReference type="RefSeq" id="WP_012202441.1">
    <property type="nucleotide sequence ID" value="NC_010002.1"/>
</dbReference>
<dbReference type="SMR" id="A9BR97"/>
<dbReference type="STRING" id="398578.Daci_0509"/>
<dbReference type="GeneID" id="94689788"/>
<dbReference type="KEGG" id="dac:Daci_0509"/>
<dbReference type="eggNOG" id="COG0222">
    <property type="taxonomic scope" value="Bacteria"/>
</dbReference>
<dbReference type="HOGENOM" id="CLU_086499_3_2_4"/>
<dbReference type="Proteomes" id="UP000000784">
    <property type="component" value="Chromosome"/>
</dbReference>
<dbReference type="GO" id="GO:0022625">
    <property type="term" value="C:cytosolic large ribosomal subunit"/>
    <property type="evidence" value="ECO:0007669"/>
    <property type="project" value="TreeGrafter"/>
</dbReference>
<dbReference type="GO" id="GO:0003729">
    <property type="term" value="F:mRNA binding"/>
    <property type="evidence" value="ECO:0007669"/>
    <property type="project" value="TreeGrafter"/>
</dbReference>
<dbReference type="GO" id="GO:0003735">
    <property type="term" value="F:structural constituent of ribosome"/>
    <property type="evidence" value="ECO:0007669"/>
    <property type="project" value="InterPro"/>
</dbReference>
<dbReference type="GO" id="GO:0006412">
    <property type="term" value="P:translation"/>
    <property type="evidence" value="ECO:0007669"/>
    <property type="project" value="UniProtKB-UniRule"/>
</dbReference>
<dbReference type="CDD" id="cd00387">
    <property type="entry name" value="Ribosomal_L7_L12"/>
    <property type="match status" value="1"/>
</dbReference>
<dbReference type="FunFam" id="3.30.1390.10:FF:000001">
    <property type="entry name" value="50S ribosomal protein L7/L12"/>
    <property type="match status" value="1"/>
</dbReference>
<dbReference type="Gene3D" id="3.30.1390.10">
    <property type="match status" value="1"/>
</dbReference>
<dbReference type="Gene3D" id="1.20.5.710">
    <property type="entry name" value="Single helix bin"/>
    <property type="match status" value="1"/>
</dbReference>
<dbReference type="HAMAP" id="MF_00368">
    <property type="entry name" value="Ribosomal_bL12"/>
    <property type="match status" value="1"/>
</dbReference>
<dbReference type="InterPro" id="IPR000206">
    <property type="entry name" value="Ribosomal_bL12"/>
</dbReference>
<dbReference type="InterPro" id="IPR013823">
    <property type="entry name" value="Ribosomal_bL12_C"/>
</dbReference>
<dbReference type="InterPro" id="IPR014719">
    <property type="entry name" value="Ribosomal_bL12_C/ClpS-like"/>
</dbReference>
<dbReference type="InterPro" id="IPR008932">
    <property type="entry name" value="Ribosomal_bL12_oligo"/>
</dbReference>
<dbReference type="InterPro" id="IPR036235">
    <property type="entry name" value="Ribosomal_bL12_oligo_N_sf"/>
</dbReference>
<dbReference type="NCBIfam" id="TIGR00855">
    <property type="entry name" value="L12"/>
    <property type="match status" value="1"/>
</dbReference>
<dbReference type="PANTHER" id="PTHR45987">
    <property type="entry name" value="39S RIBOSOMAL PROTEIN L12"/>
    <property type="match status" value="1"/>
</dbReference>
<dbReference type="PANTHER" id="PTHR45987:SF4">
    <property type="entry name" value="LARGE RIBOSOMAL SUBUNIT PROTEIN BL12M"/>
    <property type="match status" value="1"/>
</dbReference>
<dbReference type="Pfam" id="PF00542">
    <property type="entry name" value="Ribosomal_L12"/>
    <property type="match status" value="1"/>
</dbReference>
<dbReference type="Pfam" id="PF16320">
    <property type="entry name" value="Ribosomal_L12_N"/>
    <property type="match status" value="1"/>
</dbReference>
<dbReference type="SUPFAM" id="SSF54736">
    <property type="entry name" value="ClpS-like"/>
    <property type="match status" value="1"/>
</dbReference>
<dbReference type="SUPFAM" id="SSF48300">
    <property type="entry name" value="Ribosomal protein L7/12, oligomerisation (N-terminal) domain"/>
    <property type="match status" value="1"/>
</dbReference>
<reference key="1">
    <citation type="submission" date="2007-11" db="EMBL/GenBank/DDBJ databases">
        <title>Complete sequence of Delftia acidovorans DSM 14801 / SPH-1.</title>
        <authorList>
            <person name="Copeland A."/>
            <person name="Lucas S."/>
            <person name="Lapidus A."/>
            <person name="Barry K."/>
            <person name="Glavina del Rio T."/>
            <person name="Dalin E."/>
            <person name="Tice H."/>
            <person name="Pitluck S."/>
            <person name="Lowry S."/>
            <person name="Clum A."/>
            <person name="Schmutz J."/>
            <person name="Larimer F."/>
            <person name="Land M."/>
            <person name="Hauser L."/>
            <person name="Kyrpides N."/>
            <person name="Kim E."/>
            <person name="Schleheck D."/>
            <person name="Richardson P."/>
        </authorList>
    </citation>
    <scope>NUCLEOTIDE SEQUENCE [LARGE SCALE GENOMIC DNA]</scope>
    <source>
        <strain>DSM 14801 / SPH-1</strain>
    </source>
</reference>
<name>RL7_DELAS</name>
<keyword id="KW-1185">Reference proteome</keyword>
<keyword id="KW-0687">Ribonucleoprotein</keyword>
<keyword id="KW-0689">Ribosomal protein</keyword>
<sequence length="125" mass="12583">MAFDKDAFLTALDGMTVLELNDLVKAIEEKFGVSAAAMAAPAAGGAAGGAAAAEEKTEFNVVLTEAGANKVSVIKAVREITGLGLKEAKDLVDGAPKNVKEGVAKADAEAAVKKLVEAGAKAELK</sequence>